<keyword id="KW-0963">Cytoplasm</keyword>
<keyword id="KW-0489">Methyltransferase</keyword>
<keyword id="KW-0698">rRNA processing</keyword>
<keyword id="KW-0949">S-adenosyl-L-methionine</keyword>
<keyword id="KW-0808">Transferase</keyword>
<dbReference type="EC" id="2.1.1.199" evidence="1"/>
<dbReference type="EMBL" id="FM204884">
    <property type="protein sequence ID" value="CAW98245.1"/>
    <property type="molecule type" value="Genomic_DNA"/>
</dbReference>
<dbReference type="SMR" id="C0MGV8"/>
<dbReference type="KEGG" id="seq:SZO_03800"/>
<dbReference type="PATRIC" id="fig|40041.11.peg.403"/>
<dbReference type="eggNOG" id="COG0275">
    <property type="taxonomic scope" value="Bacteria"/>
</dbReference>
<dbReference type="HOGENOM" id="CLU_038422_2_0_9"/>
<dbReference type="Proteomes" id="UP000001368">
    <property type="component" value="Chromosome"/>
</dbReference>
<dbReference type="GO" id="GO:0005737">
    <property type="term" value="C:cytoplasm"/>
    <property type="evidence" value="ECO:0007669"/>
    <property type="project" value="UniProtKB-SubCell"/>
</dbReference>
<dbReference type="GO" id="GO:0071424">
    <property type="term" value="F:rRNA (cytosine-N4-)-methyltransferase activity"/>
    <property type="evidence" value="ECO:0007669"/>
    <property type="project" value="UniProtKB-UniRule"/>
</dbReference>
<dbReference type="GO" id="GO:0070475">
    <property type="term" value="P:rRNA base methylation"/>
    <property type="evidence" value="ECO:0007669"/>
    <property type="project" value="UniProtKB-UniRule"/>
</dbReference>
<dbReference type="FunFam" id="1.10.150.170:FF:000001">
    <property type="entry name" value="Ribosomal RNA small subunit methyltransferase H"/>
    <property type="match status" value="1"/>
</dbReference>
<dbReference type="Gene3D" id="1.10.150.170">
    <property type="entry name" value="Putative methyltransferase TM0872, insert domain"/>
    <property type="match status" value="1"/>
</dbReference>
<dbReference type="Gene3D" id="3.40.50.150">
    <property type="entry name" value="Vaccinia Virus protein VP39"/>
    <property type="match status" value="1"/>
</dbReference>
<dbReference type="HAMAP" id="MF_01007">
    <property type="entry name" value="16SrRNA_methyltr_H"/>
    <property type="match status" value="1"/>
</dbReference>
<dbReference type="InterPro" id="IPR002903">
    <property type="entry name" value="RsmH"/>
</dbReference>
<dbReference type="InterPro" id="IPR023397">
    <property type="entry name" value="SAM-dep_MeTrfase_MraW_recog"/>
</dbReference>
<dbReference type="InterPro" id="IPR029063">
    <property type="entry name" value="SAM-dependent_MTases_sf"/>
</dbReference>
<dbReference type="NCBIfam" id="TIGR00006">
    <property type="entry name" value="16S rRNA (cytosine(1402)-N(4))-methyltransferase RsmH"/>
    <property type="match status" value="1"/>
</dbReference>
<dbReference type="PANTHER" id="PTHR11265:SF0">
    <property type="entry name" value="12S RRNA N4-METHYLCYTIDINE METHYLTRANSFERASE"/>
    <property type="match status" value="1"/>
</dbReference>
<dbReference type="PANTHER" id="PTHR11265">
    <property type="entry name" value="S-ADENOSYL-METHYLTRANSFERASE MRAW"/>
    <property type="match status" value="1"/>
</dbReference>
<dbReference type="Pfam" id="PF01795">
    <property type="entry name" value="Methyltransf_5"/>
    <property type="match status" value="1"/>
</dbReference>
<dbReference type="PIRSF" id="PIRSF004486">
    <property type="entry name" value="MraW"/>
    <property type="match status" value="1"/>
</dbReference>
<dbReference type="SUPFAM" id="SSF81799">
    <property type="entry name" value="Putative methyltransferase TM0872, insert domain"/>
    <property type="match status" value="1"/>
</dbReference>
<dbReference type="SUPFAM" id="SSF53335">
    <property type="entry name" value="S-adenosyl-L-methionine-dependent methyltransferases"/>
    <property type="match status" value="1"/>
</dbReference>
<accession>C0MGV8</accession>
<gene>
    <name evidence="1" type="primary">rsmH</name>
    <name type="synonym">mraW</name>
    <name type="ordered locus">SZO_03800</name>
</gene>
<sequence length="316" mass="35581">MTNEFHHVTVLLHEAVDMLDIKPDGIYVDATLGGSGHSAYLLSLLGDKGHLYCFDQDQKAIDHAQEQLKPYIDKGQVTFIKDNFRHLKVRLLEHGVTEIDGILYDLGVSSPQLDERERGFSYKQDAPLDMRMDSQAALTAYEVVNTYDFNDLVRIFFKYGEDKFSKQIARKIEQARAIKPISTTTELAALIKSAKPAKELKKKGHPAKQIFQAIRIEVNDELGAADASIQQAIELLALDGRISVITFHSLEDRLTKHLFKEASTADAPKGLPFIPDELKPKLELVSRKPILPSQKELMANNRAHSAKLRVARKVRK</sequence>
<protein>
    <recommendedName>
        <fullName evidence="1">Ribosomal RNA small subunit methyltransferase H</fullName>
        <ecNumber evidence="1">2.1.1.199</ecNumber>
    </recommendedName>
    <alternativeName>
        <fullName evidence="1">16S rRNA m(4)C1402 methyltransferase</fullName>
    </alternativeName>
    <alternativeName>
        <fullName evidence="1">rRNA (cytosine-N(4)-)-methyltransferase RsmH</fullName>
    </alternativeName>
</protein>
<organism>
    <name type="scientific">Streptococcus equi subsp. zooepidemicus (strain H70)</name>
    <dbReference type="NCBI Taxonomy" id="553483"/>
    <lineage>
        <taxon>Bacteria</taxon>
        <taxon>Bacillati</taxon>
        <taxon>Bacillota</taxon>
        <taxon>Bacilli</taxon>
        <taxon>Lactobacillales</taxon>
        <taxon>Streptococcaceae</taxon>
        <taxon>Streptococcus</taxon>
    </lineage>
</organism>
<comment type="function">
    <text evidence="1">Specifically methylates the N4 position of cytidine in position 1402 (C1402) of 16S rRNA.</text>
</comment>
<comment type="catalytic activity">
    <reaction evidence="1">
        <text>cytidine(1402) in 16S rRNA + S-adenosyl-L-methionine = N(4)-methylcytidine(1402) in 16S rRNA + S-adenosyl-L-homocysteine + H(+)</text>
        <dbReference type="Rhea" id="RHEA:42928"/>
        <dbReference type="Rhea" id="RHEA-COMP:10286"/>
        <dbReference type="Rhea" id="RHEA-COMP:10287"/>
        <dbReference type="ChEBI" id="CHEBI:15378"/>
        <dbReference type="ChEBI" id="CHEBI:57856"/>
        <dbReference type="ChEBI" id="CHEBI:59789"/>
        <dbReference type="ChEBI" id="CHEBI:74506"/>
        <dbReference type="ChEBI" id="CHEBI:82748"/>
        <dbReference type="EC" id="2.1.1.199"/>
    </reaction>
</comment>
<comment type="subcellular location">
    <subcellularLocation>
        <location evidence="1">Cytoplasm</location>
    </subcellularLocation>
</comment>
<comment type="similarity">
    <text evidence="1">Belongs to the methyltransferase superfamily. RsmH family.</text>
</comment>
<feature type="chain" id="PRO_0000387146" description="Ribosomal RNA small subunit methyltransferase H">
    <location>
        <begin position="1"/>
        <end position="316"/>
    </location>
</feature>
<feature type="binding site" evidence="1">
    <location>
        <begin position="35"/>
        <end position="37"/>
    </location>
    <ligand>
        <name>S-adenosyl-L-methionine</name>
        <dbReference type="ChEBI" id="CHEBI:59789"/>
    </ligand>
</feature>
<feature type="binding site" evidence="1">
    <location>
        <position position="55"/>
    </location>
    <ligand>
        <name>S-adenosyl-L-methionine</name>
        <dbReference type="ChEBI" id="CHEBI:59789"/>
    </ligand>
</feature>
<feature type="binding site" evidence="1">
    <location>
        <position position="84"/>
    </location>
    <ligand>
        <name>S-adenosyl-L-methionine</name>
        <dbReference type="ChEBI" id="CHEBI:59789"/>
    </ligand>
</feature>
<feature type="binding site" evidence="1">
    <location>
        <position position="105"/>
    </location>
    <ligand>
        <name>S-adenosyl-L-methionine</name>
        <dbReference type="ChEBI" id="CHEBI:59789"/>
    </ligand>
</feature>
<feature type="binding site" evidence="1">
    <location>
        <position position="112"/>
    </location>
    <ligand>
        <name>S-adenosyl-L-methionine</name>
        <dbReference type="ChEBI" id="CHEBI:59789"/>
    </ligand>
</feature>
<reference key="1">
    <citation type="journal article" date="2009" name="PLoS Pathog.">
        <title>Genomic evidence for the evolution of Streptococcus equi: host restriction, increased virulence, and genetic exchange with human pathogens.</title>
        <authorList>
            <person name="Holden M.T.G."/>
            <person name="Heather Z."/>
            <person name="Paillot R."/>
            <person name="Steward K.F."/>
            <person name="Webb K."/>
            <person name="Ainslie F."/>
            <person name="Jourdan T."/>
            <person name="Bason N.C."/>
            <person name="Holroyd N.E."/>
            <person name="Mungall K."/>
            <person name="Quail M.A."/>
            <person name="Sanders M."/>
            <person name="Simmonds M."/>
            <person name="Willey D."/>
            <person name="Brooks K."/>
            <person name="Aanensen D.M."/>
            <person name="Spratt B.G."/>
            <person name="Jolley K.A."/>
            <person name="Maiden M.C.J."/>
            <person name="Kehoe M."/>
            <person name="Chanter N."/>
            <person name="Bentley S.D."/>
            <person name="Robinson C."/>
            <person name="Maskell D.J."/>
            <person name="Parkhill J."/>
            <person name="Waller A.S."/>
        </authorList>
    </citation>
    <scope>NUCLEOTIDE SEQUENCE [LARGE SCALE GENOMIC DNA]</scope>
    <source>
        <strain>H70</strain>
    </source>
</reference>
<name>RSMH_STRS7</name>
<proteinExistence type="inferred from homology"/>
<evidence type="ECO:0000255" key="1">
    <source>
        <dbReference type="HAMAP-Rule" id="MF_01007"/>
    </source>
</evidence>